<keyword id="KW-1003">Cell membrane</keyword>
<keyword id="KW-0342">GTP-binding</keyword>
<keyword id="KW-0378">Hydrolase</keyword>
<keyword id="KW-0472">Membrane</keyword>
<keyword id="KW-0547">Nucleotide-binding</keyword>
<keyword id="KW-0648">Protein biosynthesis</keyword>
<accession>A1KL96</accession>
<dbReference type="EC" id="3.6.5.n1" evidence="1"/>
<dbReference type="EMBL" id="AM408590">
    <property type="protein sequence ID" value="CAL72408.1"/>
    <property type="molecule type" value="Genomic_DNA"/>
</dbReference>
<dbReference type="RefSeq" id="WP_003900516.1">
    <property type="nucleotide sequence ID" value="NC_008769.1"/>
</dbReference>
<dbReference type="SMR" id="A1KL96"/>
<dbReference type="GeneID" id="45426394"/>
<dbReference type="KEGG" id="mbb:BCG_2420c"/>
<dbReference type="HOGENOM" id="CLU_009995_3_3_11"/>
<dbReference type="Proteomes" id="UP000001472">
    <property type="component" value="Chromosome"/>
</dbReference>
<dbReference type="GO" id="GO:0005886">
    <property type="term" value="C:plasma membrane"/>
    <property type="evidence" value="ECO:0007669"/>
    <property type="project" value="UniProtKB-SubCell"/>
</dbReference>
<dbReference type="GO" id="GO:0005525">
    <property type="term" value="F:GTP binding"/>
    <property type="evidence" value="ECO:0007669"/>
    <property type="project" value="UniProtKB-UniRule"/>
</dbReference>
<dbReference type="GO" id="GO:0003924">
    <property type="term" value="F:GTPase activity"/>
    <property type="evidence" value="ECO:0007669"/>
    <property type="project" value="UniProtKB-UniRule"/>
</dbReference>
<dbReference type="GO" id="GO:0043022">
    <property type="term" value="F:ribosome binding"/>
    <property type="evidence" value="ECO:0007669"/>
    <property type="project" value="UniProtKB-UniRule"/>
</dbReference>
<dbReference type="GO" id="GO:0003746">
    <property type="term" value="F:translation elongation factor activity"/>
    <property type="evidence" value="ECO:0007669"/>
    <property type="project" value="UniProtKB-UniRule"/>
</dbReference>
<dbReference type="GO" id="GO:0045727">
    <property type="term" value="P:positive regulation of translation"/>
    <property type="evidence" value="ECO:0007669"/>
    <property type="project" value="UniProtKB-UniRule"/>
</dbReference>
<dbReference type="CDD" id="cd03699">
    <property type="entry name" value="EF4_II"/>
    <property type="match status" value="1"/>
</dbReference>
<dbReference type="CDD" id="cd16260">
    <property type="entry name" value="EF4_III"/>
    <property type="match status" value="1"/>
</dbReference>
<dbReference type="CDD" id="cd01890">
    <property type="entry name" value="LepA"/>
    <property type="match status" value="1"/>
</dbReference>
<dbReference type="CDD" id="cd03709">
    <property type="entry name" value="lepA_C"/>
    <property type="match status" value="1"/>
</dbReference>
<dbReference type="FunFam" id="3.30.70.240:FF:000011">
    <property type="entry name" value="Elongation factor 4"/>
    <property type="match status" value="1"/>
</dbReference>
<dbReference type="FunFam" id="3.40.50.300:FF:000078">
    <property type="entry name" value="Elongation factor 4"/>
    <property type="match status" value="1"/>
</dbReference>
<dbReference type="FunFam" id="2.40.30.10:FF:000015">
    <property type="entry name" value="Translation factor GUF1, mitochondrial"/>
    <property type="match status" value="1"/>
</dbReference>
<dbReference type="FunFam" id="3.30.70.2570:FF:000001">
    <property type="entry name" value="Translation factor GUF1, mitochondrial"/>
    <property type="match status" value="1"/>
</dbReference>
<dbReference type="FunFam" id="3.30.70.870:FF:000004">
    <property type="entry name" value="Translation factor GUF1, mitochondrial"/>
    <property type="match status" value="1"/>
</dbReference>
<dbReference type="Gene3D" id="3.30.70.240">
    <property type="match status" value="1"/>
</dbReference>
<dbReference type="Gene3D" id="3.30.70.2570">
    <property type="entry name" value="Elongation factor 4, C-terminal domain"/>
    <property type="match status" value="1"/>
</dbReference>
<dbReference type="Gene3D" id="3.30.70.870">
    <property type="entry name" value="Elongation Factor G (Translational Gtpase), domain 3"/>
    <property type="match status" value="1"/>
</dbReference>
<dbReference type="Gene3D" id="3.40.50.300">
    <property type="entry name" value="P-loop containing nucleotide triphosphate hydrolases"/>
    <property type="match status" value="1"/>
</dbReference>
<dbReference type="Gene3D" id="2.40.30.10">
    <property type="entry name" value="Translation factors"/>
    <property type="match status" value="1"/>
</dbReference>
<dbReference type="HAMAP" id="MF_00071">
    <property type="entry name" value="LepA"/>
    <property type="match status" value="1"/>
</dbReference>
<dbReference type="InterPro" id="IPR006297">
    <property type="entry name" value="EF-4"/>
</dbReference>
<dbReference type="InterPro" id="IPR035647">
    <property type="entry name" value="EFG_III/V"/>
</dbReference>
<dbReference type="InterPro" id="IPR000640">
    <property type="entry name" value="EFG_V-like"/>
</dbReference>
<dbReference type="InterPro" id="IPR004161">
    <property type="entry name" value="EFTu-like_2"/>
</dbReference>
<dbReference type="InterPro" id="IPR031157">
    <property type="entry name" value="G_TR_CS"/>
</dbReference>
<dbReference type="InterPro" id="IPR038363">
    <property type="entry name" value="LepA_C_sf"/>
</dbReference>
<dbReference type="InterPro" id="IPR013842">
    <property type="entry name" value="LepA_CTD"/>
</dbReference>
<dbReference type="InterPro" id="IPR035654">
    <property type="entry name" value="LepA_IV"/>
</dbReference>
<dbReference type="InterPro" id="IPR027417">
    <property type="entry name" value="P-loop_NTPase"/>
</dbReference>
<dbReference type="InterPro" id="IPR005225">
    <property type="entry name" value="Small_GTP-bd"/>
</dbReference>
<dbReference type="InterPro" id="IPR000795">
    <property type="entry name" value="T_Tr_GTP-bd_dom"/>
</dbReference>
<dbReference type="InterPro" id="IPR009000">
    <property type="entry name" value="Transl_B-barrel_sf"/>
</dbReference>
<dbReference type="NCBIfam" id="TIGR01393">
    <property type="entry name" value="lepA"/>
    <property type="match status" value="1"/>
</dbReference>
<dbReference type="NCBIfam" id="TIGR00231">
    <property type="entry name" value="small_GTP"/>
    <property type="match status" value="1"/>
</dbReference>
<dbReference type="PANTHER" id="PTHR43512:SF4">
    <property type="entry name" value="TRANSLATION FACTOR GUF1 HOMOLOG, CHLOROPLASTIC"/>
    <property type="match status" value="1"/>
</dbReference>
<dbReference type="PANTHER" id="PTHR43512">
    <property type="entry name" value="TRANSLATION FACTOR GUF1-RELATED"/>
    <property type="match status" value="1"/>
</dbReference>
<dbReference type="Pfam" id="PF00679">
    <property type="entry name" value="EFG_C"/>
    <property type="match status" value="1"/>
</dbReference>
<dbReference type="Pfam" id="PF00009">
    <property type="entry name" value="GTP_EFTU"/>
    <property type="match status" value="1"/>
</dbReference>
<dbReference type="Pfam" id="PF03144">
    <property type="entry name" value="GTP_EFTU_D2"/>
    <property type="match status" value="1"/>
</dbReference>
<dbReference type="Pfam" id="PF06421">
    <property type="entry name" value="LepA_C"/>
    <property type="match status" value="1"/>
</dbReference>
<dbReference type="PRINTS" id="PR00315">
    <property type="entry name" value="ELONGATNFCT"/>
</dbReference>
<dbReference type="SMART" id="SM00838">
    <property type="entry name" value="EFG_C"/>
    <property type="match status" value="1"/>
</dbReference>
<dbReference type="SUPFAM" id="SSF54980">
    <property type="entry name" value="EF-G C-terminal domain-like"/>
    <property type="match status" value="2"/>
</dbReference>
<dbReference type="SUPFAM" id="SSF52540">
    <property type="entry name" value="P-loop containing nucleoside triphosphate hydrolases"/>
    <property type="match status" value="1"/>
</dbReference>
<dbReference type="SUPFAM" id="SSF50447">
    <property type="entry name" value="Translation proteins"/>
    <property type="match status" value="1"/>
</dbReference>
<dbReference type="PROSITE" id="PS00301">
    <property type="entry name" value="G_TR_1"/>
    <property type="match status" value="1"/>
</dbReference>
<dbReference type="PROSITE" id="PS51722">
    <property type="entry name" value="G_TR_2"/>
    <property type="match status" value="1"/>
</dbReference>
<evidence type="ECO:0000255" key="1">
    <source>
        <dbReference type="HAMAP-Rule" id="MF_00071"/>
    </source>
</evidence>
<evidence type="ECO:0000256" key="2">
    <source>
        <dbReference type="SAM" id="MobiDB-lite"/>
    </source>
</evidence>
<feature type="chain" id="PRO_1000032020" description="Elongation factor 4">
    <location>
        <begin position="1"/>
        <end position="653"/>
    </location>
</feature>
<feature type="domain" description="tr-type G">
    <location>
        <begin position="50"/>
        <end position="231"/>
    </location>
</feature>
<feature type="region of interest" description="Disordered" evidence="2">
    <location>
        <begin position="1"/>
        <end position="30"/>
    </location>
</feature>
<feature type="binding site" evidence="1">
    <location>
        <begin position="62"/>
        <end position="67"/>
    </location>
    <ligand>
        <name>GTP</name>
        <dbReference type="ChEBI" id="CHEBI:37565"/>
    </ligand>
</feature>
<feature type="binding site" evidence="1">
    <location>
        <begin position="178"/>
        <end position="181"/>
    </location>
    <ligand>
        <name>GTP</name>
        <dbReference type="ChEBI" id="CHEBI:37565"/>
    </ligand>
</feature>
<proteinExistence type="inferred from homology"/>
<gene>
    <name evidence="1" type="primary">lepA</name>
    <name type="ordered locus">BCG_2420c</name>
</gene>
<reference key="1">
    <citation type="journal article" date="2007" name="Proc. Natl. Acad. Sci. U.S.A.">
        <title>Genome plasticity of BCG and impact on vaccine efficacy.</title>
        <authorList>
            <person name="Brosch R."/>
            <person name="Gordon S.V."/>
            <person name="Garnier T."/>
            <person name="Eiglmeier K."/>
            <person name="Frigui W."/>
            <person name="Valenti P."/>
            <person name="Dos Santos S."/>
            <person name="Duthoy S."/>
            <person name="Lacroix C."/>
            <person name="Garcia-Pelayo C."/>
            <person name="Inwald J.K."/>
            <person name="Golby P."/>
            <person name="Garcia J.N."/>
            <person name="Hewinson R.G."/>
            <person name="Behr M.A."/>
            <person name="Quail M.A."/>
            <person name="Churcher C."/>
            <person name="Barrell B.G."/>
            <person name="Parkhill J."/>
            <person name="Cole S.T."/>
        </authorList>
    </citation>
    <scope>NUCLEOTIDE SEQUENCE [LARGE SCALE GENOMIC DNA]</scope>
    <source>
        <strain>BCG / Pasteur 1173P2</strain>
    </source>
</reference>
<comment type="function">
    <text evidence="1">Required for accurate and efficient protein synthesis under certain stress conditions. May act as a fidelity factor of the translation reaction, by catalyzing a one-codon backward translocation of tRNAs on improperly translocated ribosomes. Back-translocation proceeds from a post-translocation (POST) complex to a pre-translocation (PRE) complex, thus giving elongation factor G a second chance to translocate the tRNAs correctly. Binds to ribosomes in a GTP-dependent manner.</text>
</comment>
<comment type="catalytic activity">
    <reaction evidence="1">
        <text>GTP + H2O = GDP + phosphate + H(+)</text>
        <dbReference type="Rhea" id="RHEA:19669"/>
        <dbReference type="ChEBI" id="CHEBI:15377"/>
        <dbReference type="ChEBI" id="CHEBI:15378"/>
        <dbReference type="ChEBI" id="CHEBI:37565"/>
        <dbReference type="ChEBI" id="CHEBI:43474"/>
        <dbReference type="ChEBI" id="CHEBI:58189"/>
        <dbReference type="EC" id="3.6.5.n1"/>
    </reaction>
</comment>
<comment type="subcellular location">
    <subcellularLocation>
        <location evidence="1">Cell membrane</location>
        <topology evidence="1">Peripheral membrane protein</topology>
        <orientation evidence="1">Cytoplasmic side</orientation>
    </subcellularLocation>
</comment>
<comment type="similarity">
    <text evidence="1">Belongs to the TRAFAC class translation factor GTPase superfamily. Classic translation factor GTPase family. LepA subfamily.</text>
</comment>
<protein>
    <recommendedName>
        <fullName evidence="1">Elongation factor 4</fullName>
        <shortName evidence="1">EF-4</shortName>
        <ecNumber evidence="1">3.6.5.n1</ecNumber>
    </recommendedName>
    <alternativeName>
        <fullName evidence="1">Ribosomal back-translocase LepA</fullName>
    </alternativeName>
</protein>
<organism>
    <name type="scientific">Mycobacterium bovis (strain BCG / Pasteur 1173P2)</name>
    <dbReference type="NCBI Taxonomy" id="410289"/>
    <lineage>
        <taxon>Bacteria</taxon>
        <taxon>Bacillati</taxon>
        <taxon>Actinomycetota</taxon>
        <taxon>Actinomycetes</taxon>
        <taxon>Mycobacteriales</taxon>
        <taxon>Mycobacteriaceae</taxon>
        <taxon>Mycobacterium</taxon>
        <taxon>Mycobacterium tuberculosis complex</taxon>
    </lineage>
</organism>
<sequence length="653" mass="72396">MRTPCSQHRRDRPSAIGSQLPDADTLDTRQPPLQEIPISSFADKTFTAPAQIRNFCIIAHIDHGKSTLADRMLQLTGVVDERSMRAQYLDRMDIERERGITIKAQNVRLPWRVDKTDYVLHLIDTPGHVDFTYEVSRALEACEGAVLLVDAAQGIEAQTLANLYLALDRDLHIIPVLNKIDLPAADPDRYAAEMAHIIGCEPAEVLRVSGKTGEGVSDLLDEVVRQVPPPQGDAEAPTRAMIFDSVYDIYRGVVTYVRVVDGKISPRERIMMMSTGATHELLEVGIVSPEPKPCEGLGVGEVGYLITGVKDVRQSKVGDTVTSLSRARGAAAEALTGYREPKPMVYSGLYPVDGSDYPNLRDALDKLQLNDAALTYEPETSVALGFGFRCGFLGLLHMEITRERLEREFGLDLISTSPNVVYRVHKDDGTEIRVTNPSDWPEGKIRTVYEPVVKTTIIAPSEFIGTIMELCQSRRGELGGMDYLSPERVELRYTMPLGEIIFDFFDALKSRTRGYASLDYEEAGEQEAALVKVDILLQGEAVDAFSAIVHKDTAYAYGNKMTTKLKELIPRQQFEVPVQAAIGSKIIARENIRAIRKDVLSKCYGGDITRKRKLLEKQKEGKKRMKTIGRVEVPQEAFVAALSTDAAGDKGKK</sequence>
<name>LEPA_MYCBP</name>